<dbReference type="EC" id="2.7.7.23" evidence="1"/>
<dbReference type="EC" id="2.3.1.157" evidence="1"/>
<dbReference type="EMBL" id="CP000769">
    <property type="protein sequence ID" value="ABS24678.1"/>
    <property type="molecule type" value="Genomic_DNA"/>
</dbReference>
<dbReference type="RefSeq" id="WP_011984784.1">
    <property type="nucleotide sequence ID" value="NC_009675.1"/>
</dbReference>
<dbReference type="SMR" id="A7H7I2"/>
<dbReference type="STRING" id="404589.Anae109_0463"/>
<dbReference type="KEGG" id="afw:Anae109_0463"/>
<dbReference type="eggNOG" id="COG1207">
    <property type="taxonomic scope" value="Bacteria"/>
</dbReference>
<dbReference type="HOGENOM" id="CLU_029499_15_2_7"/>
<dbReference type="OrthoDB" id="9775031at2"/>
<dbReference type="UniPathway" id="UPA00113">
    <property type="reaction ID" value="UER00532"/>
</dbReference>
<dbReference type="UniPathway" id="UPA00113">
    <property type="reaction ID" value="UER00533"/>
</dbReference>
<dbReference type="UniPathway" id="UPA00973"/>
<dbReference type="Proteomes" id="UP000006382">
    <property type="component" value="Chromosome"/>
</dbReference>
<dbReference type="GO" id="GO:0005737">
    <property type="term" value="C:cytoplasm"/>
    <property type="evidence" value="ECO:0007669"/>
    <property type="project" value="UniProtKB-SubCell"/>
</dbReference>
<dbReference type="GO" id="GO:0016020">
    <property type="term" value="C:membrane"/>
    <property type="evidence" value="ECO:0007669"/>
    <property type="project" value="GOC"/>
</dbReference>
<dbReference type="GO" id="GO:0019134">
    <property type="term" value="F:glucosamine-1-phosphate N-acetyltransferase activity"/>
    <property type="evidence" value="ECO:0007669"/>
    <property type="project" value="UniProtKB-UniRule"/>
</dbReference>
<dbReference type="GO" id="GO:0000287">
    <property type="term" value="F:magnesium ion binding"/>
    <property type="evidence" value="ECO:0007669"/>
    <property type="project" value="UniProtKB-UniRule"/>
</dbReference>
<dbReference type="GO" id="GO:0003977">
    <property type="term" value="F:UDP-N-acetylglucosamine diphosphorylase activity"/>
    <property type="evidence" value="ECO:0007669"/>
    <property type="project" value="UniProtKB-UniRule"/>
</dbReference>
<dbReference type="GO" id="GO:0000902">
    <property type="term" value="P:cell morphogenesis"/>
    <property type="evidence" value="ECO:0007669"/>
    <property type="project" value="UniProtKB-UniRule"/>
</dbReference>
<dbReference type="GO" id="GO:0071555">
    <property type="term" value="P:cell wall organization"/>
    <property type="evidence" value="ECO:0007669"/>
    <property type="project" value="UniProtKB-KW"/>
</dbReference>
<dbReference type="GO" id="GO:0009245">
    <property type="term" value="P:lipid A biosynthetic process"/>
    <property type="evidence" value="ECO:0007669"/>
    <property type="project" value="UniProtKB-UniRule"/>
</dbReference>
<dbReference type="GO" id="GO:0009252">
    <property type="term" value="P:peptidoglycan biosynthetic process"/>
    <property type="evidence" value="ECO:0007669"/>
    <property type="project" value="UniProtKB-UniRule"/>
</dbReference>
<dbReference type="GO" id="GO:0008360">
    <property type="term" value="P:regulation of cell shape"/>
    <property type="evidence" value="ECO:0007669"/>
    <property type="project" value="UniProtKB-KW"/>
</dbReference>
<dbReference type="GO" id="GO:0006048">
    <property type="term" value="P:UDP-N-acetylglucosamine biosynthetic process"/>
    <property type="evidence" value="ECO:0007669"/>
    <property type="project" value="UniProtKB-UniPathway"/>
</dbReference>
<dbReference type="CDD" id="cd02540">
    <property type="entry name" value="GT2_GlmU_N_bac"/>
    <property type="match status" value="1"/>
</dbReference>
<dbReference type="CDD" id="cd03353">
    <property type="entry name" value="LbH_GlmU_C"/>
    <property type="match status" value="1"/>
</dbReference>
<dbReference type="Gene3D" id="2.160.10.10">
    <property type="entry name" value="Hexapeptide repeat proteins"/>
    <property type="match status" value="1"/>
</dbReference>
<dbReference type="Gene3D" id="3.90.550.10">
    <property type="entry name" value="Spore Coat Polysaccharide Biosynthesis Protein SpsA, Chain A"/>
    <property type="match status" value="1"/>
</dbReference>
<dbReference type="HAMAP" id="MF_01631">
    <property type="entry name" value="GlmU"/>
    <property type="match status" value="1"/>
</dbReference>
<dbReference type="InterPro" id="IPR005882">
    <property type="entry name" value="Bifunctional_GlmU"/>
</dbReference>
<dbReference type="InterPro" id="IPR050065">
    <property type="entry name" value="GlmU-like"/>
</dbReference>
<dbReference type="InterPro" id="IPR038009">
    <property type="entry name" value="GlmU_C_LbH"/>
</dbReference>
<dbReference type="InterPro" id="IPR001451">
    <property type="entry name" value="Hexapep"/>
</dbReference>
<dbReference type="InterPro" id="IPR018357">
    <property type="entry name" value="Hexapep_transf_CS"/>
</dbReference>
<dbReference type="InterPro" id="IPR025877">
    <property type="entry name" value="MobA-like_NTP_Trfase"/>
</dbReference>
<dbReference type="InterPro" id="IPR029044">
    <property type="entry name" value="Nucleotide-diphossugar_trans"/>
</dbReference>
<dbReference type="InterPro" id="IPR011004">
    <property type="entry name" value="Trimer_LpxA-like_sf"/>
</dbReference>
<dbReference type="NCBIfam" id="TIGR01173">
    <property type="entry name" value="glmU"/>
    <property type="match status" value="1"/>
</dbReference>
<dbReference type="PANTHER" id="PTHR43584:SF3">
    <property type="entry name" value="BIFUNCTIONAL PROTEIN GLMU"/>
    <property type="match status" value="1"/>
</dbReference>
<dbReference type="PANTHER" id="PTHR43584">
    <property type="entry name" value="NUCLEOTIDYL TRANSFERASE"/>
    <property type="match status" value="1"/>
</dbReference>
<dbReference type="Pfam" id="PF00132">
    <property type="entry name" value="Hexapep"/>
    <property type="match status" value="2"/>
</dbReference>
<dbReference type="Pfam" id="PF12804">
    <property type="entry name" value="NTP_transf_3"/>
    <property type="match status" value="1"/>
</dbReference>
<dbReference type="SUPFAM" id="SSF53448">
    <property type="entry name" value="Nucleotide-diphospho-sugar transferases"/>
    <property type="match status" value="1"/>
</dbReference>
<dbReference type="SUPFAM" id="SSF51161">
    <property type="entry name" value="Trimeric LpxA-like enzymes"/>
    <property type="match status" value="1"/>
</dbReference>
<dbReference type="PROSITE" id="PS00101">
    <property type="entry name" value="HEXAPEP_TRANSFERASES"/>
    <property type="match status" value="1"/>
</dbReference>
<comment type="function">
    <text evidence="1">Catalyzes the last two sequential reactions in the de novo biosynthetic pathway for UDP-N-acetylglucosamine (UDP-GlcNAc). The C-terminal domain catalyzes the transfer of acetyl group from acetyl coenzyme A to glucosamine-1-phosphate (GlcN-1-P) to produce N-acetylglucosamine-1-phosphate (GlcNAc-1-P), which is converted into UDP-GlcNAc by the transfer of uridine 5-monophosphate (from uridine 5-triphosphate), a reaction catalyzed by the N-terminal domain.</text>
</comment>
<comment type="catalytic activity">
    <reaction evidence="1">
        <text>alpha-D-glucosamine 1-phosphate + acetyl-CoA = N-acetyl-alpha-D-glucosamine 1-phosphate + CoA + H(+)</text>
        <dbReference type="Rhea" id="RHEA:13725"/>
        <dbReference type="ChEBI" id="CHEBI:15378"/>
        <dbReference type="ChEBI" id="CHEBI:57287"/>
        <dbReference type="ChEBI" id="CHEBI:57288"/>
        <dbReference type="ChEBI" id="CHEBI:57776"/>
        <dbReference type="ChEBI" id="CHEBI:58516"/>
        <dbReference type="EC" id="2.3.1.157"/>
    </reaction>
</comment>
<comment type="catalytic activity">
    <reaction evidence="1">
        <text>N-acetyl-alpha-D-glucosamine 1-phosphate + UTP + H(+) = UDP-N-acetyl-alpha-D-glucosamine + diphosphate</text>
        <dbReference type="Rhea" id="RHEA:13509"/>
        <dbReference type="ChEBI" id="CHEBI:15378"/>
        <dbReference type="ChEBI" id="CHEBI:33019"/>
        <dbReference type="ChEBI" id="CHEBI:46398"/>
        <dbReference type="ChEBI" id="CHEBI:57705"/>
        <dbReference type="ChEBI" id="CHEBI:57776"/>
        <dbReference type="EC" id="2.7.7.23"/>
    </reaction>
</comment>
<comment type="cofactor">
    <cofactor evidence="1">
        <name>Mg(2+)</name>
        <dbReference type="ChEBI" id="CHEBI:18420"/>
    </cofactor>
    <text evidence="1">Binds 1 Mg(2+) ion per subunit.</text>
</comment>
<comment type="pathway">
    <text evidence="1">Nucleotide-sugar biosynthesis; UDP-N-acetyl-alpha-D-glucosamine biosynthesis; N-acetyl-alpha-D-glucosamine 1-phosphate from alpha-D-glucosamine 6-phosphate (route II): step 2/2.</text>
</comment>
<comment type="pathway">
    <text evidence="1">Nucleotide-sugar biosynthesis; UDP-N-acetyl-alpha-D-glucosamine biosynthesis; UDP-N-acetyl-alpha-D-glucosamine from N-acetyl-alpha-D-glucosamine 1-phosphate: step 1/1.</text>
</comment>
<comment type="pathway">
    <text evidence="1">Bacterial outer membrane biogenesis; LPS lipid A biosynthesis.</text>
</comment>
<comment type="subunit">
    <text evidence="1">Homotrimer.</text>
</comment>
<comment type="subcellular location">
    <subcellularLocation>
        <location evidence="1">Cytoplasm</location>
    </subcellularLocation>
</comment>
<comment type="similarity">
    <text evidence="1">In the N-terminal section; belongs to the N-acetylglucosamine-1-phosphate uridyltransferase family.</text>
</comment>
<comment type="similarity">
    <text evidence="1">In the C-terminal section; belongs to the transferase hexapeptide repeat family.</text>
</comment>
<protein>
    <recommendedName>
        <fullName evidence="1">Bifunctional protein GlmU</fullName>
    </recommendedName>
    <domain>
        <recommendedName>
            <fullName evidence="1">UDP-N-acetylglucosamine pyrophosphorylase</fullName>
            <ecNumber evidence="1">2.7.7.23</ecNumber>
        </recommendedName>
        <alternativeName>
            <fullName evidence="1">N-acetylglucosamine-1-phosphate uridyltransferase</fullName>
        </alternativeName>
    </domain>
    <domain>
        <recommendedName>
            <fullName evidence="1">Glucosamine-1-phosphate N-acetyltransferase</fullName>
            <ecNumber evidence="1">2.3.1.157</ecNumber>
        </recommendedName>
    </domain>
</protein>
<accession>A7H7I2</accession>
<keyword id="KW-0012">Acyltransferase</keyword>
<keyword id="KW-0133">Cell shape</keyword>
<keyword id="KW-0961">Cell wall biogenesis/degradation</keyword>
<keyword id="KW-0963">Cytoplasm</keyword>
<keyword id="KW-0460">Magnesium</keyword>
<keyword id="KW-0479">Metal-binding</keyword>
<keyword id="KW-0511">Multifunctional enzyme</keyword>
<keyword id="KW-0548">Nucleotidyltransferase</keyword>
<keyword id="KW-0573">Peptidoglycan synthesis</keyword>
<keyword id="KW-1185">Reference proteome</keyword>
<keyword id="KW-0677">Repeat</keyword>
<keyword id="KW-0808">Transferase</keyword>
<proteinExistence type="inferred from homology"/>
<name>GLMU_ANADF</name>
<reference key="1">
    <citation type="journal article" date="2015" name="Genome Announc.">
        <title>Complete genome sequence of Anaeromyxobacter sp. Fw109-5, an anaerobic, metal-reducing bacterium isolated from a contaminated subsurface environment.</title>
        <authorList>
            <person name="Hwang C."/>
            <person name="Copeland A."/>
            <person name="Lucas S."/>
            <person name="Lapidus A."/>
            <person name="Barry K."/>
            <person name="Glavina Del Rio T."/>
            <person name="Dalin E."/>
            <person name="Tice H."/>
            <person name="Pitluck S."/>
            <person name="Sims D."/>
            <person name="Brettin T."/>
            <person name="Bruce D.C."/>
            <person name="Detter J.C."/>
            <person name="Han C.S."/>
            <person name="Schmutz J."/>
            <person name="Larimer F.W."/>
            <person name="Land M.L."/>
            <person name="Hauser L.J."/>
            <person name="Kyrpides N."/>
            <person name="Lykidis A."/>
            <person name="Richardson P."/>
            <person name="Belieav A."/>
            <person name="Sanford R.A."/>
            <person name="Loeffler F.E."/>
            <person name="Fields M.W."/>
        </authorList>
    </citation>
    <scope>NUCLEOTIDE SEQUENCE [LARGE SCALE GENOMIC DNA]</scope>
    <source>
        <strain>Fw109-5</strain>
    </source>
</reference>
<feature type="chain" id="PRO_1000056136" description="Bifunctional protein GlmU">
    <location>
        <begin position="1"/>
        <end position="487"/>
    </location>
</feature>
<feature type="region of interest" description="Pyrophosphorylase" evidence="1">
    <location>
        <begin position="1"/>
        <end position="235"/>
    </location>
</feature>
<feature type="region of interest" description="Linker" evidence="1">
    <location>
        <begin position="236"/>
        <end position="256"/>
    </location>
</feature>
<feature type="region of interest" description="N-acetyltransferase" evidence="1">
    <location>
        <begin position="257"/>
        <end position="487"/>
    </location>
</feature>
<feature type="region of interest" description="Disordered" evidence="2">
    <location>
        <begin position="453"/>
        <end position="487"/>
    </location>
</feature>
<feature type="compositionally biased region" description="Low complexity" evidence="2">
    <location>
        <begin position="468"/>
        <end position="481"/>
    </location>
</feature>
<feature type="active site" description="Proton acceptor" evidence="1">
    <location>
        <position position="369"/>
    </location>
</feature>
<feature type="binding site" evidence="1">
    <location>
        <begin position="13"/>
        <end position="16"/>
    </location>
    <ligand>
        <name>UDP-N-acetyl-alpha-D-glucosamine</name>
        <dbReference type="ChEBI" id="CHEBI:57705"/>
    </ligand>
</feature>
<feature type="binding site" evidence="1">
    <location>
        <position position="27"/>
    </location>
    <ligand>
        <name>UDP-N-acetyl-alpha-D-glucosamine</name>
        <dbReference type="ChEBI" id="CHEBI:57705"/>
    </ligand>
</feature>
<feature type="binding site" evidence="1">
    <location>
        <position position="82"/>
    </location>
    <ligand>
        <name>UDP-N-acetyl-alpha-D-glucosamine</name>
        <dbReference type="ChEBI" id="CHEBI:57705"/>
    </ligand>
</feature>
<feature type="binding site" evidence="1">
    <location>
        <begin position="87"/>
        <end position="88"/>
    </location>
    <ligand>
        <name>UDP-N-acetyl-alpha-D-glucosamine</name>
        <dbReference type="ChEBI" id="CHEBI:57705"/>
    </ligand>
</feature>
<feature type="binding site" evidence="1">
    <location>
        <begin position="110"/>
        <end position="112"/>
    </location>
    <ligand>
        <name>UDP-N-acetyl-alpha-D-glucosamine</name>
        <dbReference type="ChEBI" id="CHEBI:57705"/>
    </ligand>
</feature>
<feature type="binding site" evidence="1">
    <location>
        <position position="112"/>
    </location>
    <ligand>
        <name>Mg(2+)</name>
        <dbReference type="ChEBI" id="CHEBI:18420"/>
    </ligand>
</feature>
<feature type="binding site" evidence="1">
    <location>
        <position position="147"/>
    </location>
    <ligand>
        <name>UDP-N-acetyl-alpha-D-glucosamine</name>
        <dbReference type="ChEBI" id="CHEBI:57705"/>
    </ligand>
</feature>
<feature type="binding site" evidence="1">
    <location>
        <position position="162"/>
    </location>
    <ligand>
        <name>UDP-N-acetyl-alpha-D-glucosamine</name>
        <dbReference type="ChEBI" id="CHEBI:57705"/>
    </ligand>
</feature>
<feature type="binding site" evidence="1">
    <location>
        <position position="177"/>
    </location>
    <ligand>
        <name>UDP-N-acetyl-alpha-D-glucosamine</name>
        <dbReference type="ChEBI" id="CHEBI:57705"/>
    </ligand>
</feature>
<feature type="binding site" evidence="1">
    <location>
        <position position="233"/>
    </location>
    <ligand>
        <name>Mg(2+)</name>
        <dbReference type="ChEBI" id="CHEBI:18420"/>
    </ligand>
</feature>
<feature type="binding site" evidence="1">
    <location>
        <position position="233"/>
    </location>
    <ligand>
        <name>UDP-N-acetyl-alpha-D-glucosamine</name>
        <dbReference type="ChEBI" id="CHEBI:57705"/>
    </ligand>
</feature>
<feature type="binding site" evidence="1">
    <location>
        <position position="339"/>
    </location>
    <ligand>
        <name>UDP-N-acetyl-alpha-D-glucosamine</name>
        <dbReference type="ChEBI" id="CHEBI:57705"/>
    </ligand>
</feature>
<feature type="binding site" evidence="1">
    <location>
        <position position="357"/>
    </location>
    <ligand>
        <name>UDP-N-acetyl-alpha-D-glucosamine</name>
        <dbReference type="ChEBI" id="CHEBI:57705"/>
    </ligand>
</feature>
<feature type="binding site" evidence="1">
    <location>
        <position position="372"/>
    </location>
    <ligand>
        <name>UDP-N-acetyl-alpha-D-glucosamine</name>
        <dbReference type="ChEBI" id="CHEBI:57705"/>
    </ligand>
</feature>
<feature type="binding site" evidence="1">
    <location>
        <position position="383"/>
    </location>
    <ligand>
        <name>UDP-N-acetyl-alpha-D-glucosamine</name>
        <dbReference type="ChEBI" id="CHEBI:57705"/>
    </ligand>
</feature>
<feature type="binding site" evidence="1">
    <location>
        <position position="386"/>
    </location>
    <ligand>
        <name>acetyl-CoA</name>
        <dbReference type="ChEBI" id="CHEBI:57288"/>
    </ligand>
</feature>
<feature type="binding site" evidence="1">
    <location>
        <begin position="392"/>
        <end position="393"/>
    </location>
    <ligand>
        <name>acetyl-CoA</name>
        <dbReference type="ChEBI" id="CHEBI:57288"/>
    </ligand>
</feature>
<feature type="binding site" evidence="1">
    <location>
        <position position="411"/>
    </location>
    <ligand>
        <name>acetyl-CoA</name>
        <dbReference type="ChEBI" id="CHEBI:57288"/>
    </ligand>
</feature>
<feature type="binding site" evidence="1">
    <location>
        <position position="429"/>
    </location>
    <ligand>
        <name>acetyl-CoA</name>
        <dbReference type="ChEBI" id="CHEBI:57288"/>
    </ligand>
</feature>
<feature type="binding site" evidence="1">
    <location>
        <position position="446"/>
    </location>
    <ligand>
        <name>acetyl-CoA</name>
        <dbReference type="ChEBI" id="CHEBI:57288"/>
    </ligand>
</feature>
<gene>
    <name evidence="1" type="primary">glmU</name>
    <name type="ordered locus">Anae109_0463</name>
</gene>
<organism>
    <name type="scientific">Anaeromyxobacter sp. (strain Fw109-5)</name>
    <dbReference type="NCBI Taxonomy" id="404589"/>
    <lineage>
        <taxon>Bacteria</taxon>
        <taxon>Pseudomonadati</taxon>
        <taxon>Myxococcota</taxon>
        <taxon>Myxococcia</taxon>
        <taxon>Myxococcales</taxon>
        <taxon>Cystobacterineae</taxon>
        <taxon>Anaeromyxobacteraceae</taxon>
        <taxon>Anaeromyxobacter</taxon>
    </lineage>
</organism>
<sequence>MSHSPTPLAAIVLAAGKGTRMKSQKAKVLHEVGGRPLAWFPTRRALEIGANPVVAVVGHQAEAVEAALAATLPGAPLRFAVQREQLGTAHAVLSAREALGRYQGAVLILSGDTPLLRAETLSRVVAARAGATLSLATMRLADPHGYGRIVRDPAGTPARVVEEKDATDAERALDEVNAGLYCADAAFLWEALSKVGSANAQREFYLTDLVAMAARAGGVVAVPVPPEEASGVNDREELARAGRVLLRRRASELMRSGVTIEDPERFDCDEGVEIGADAVIEPNVRLKGRTRIGAGCRLGAGAILTDAVLADGVTVKPYTVIEEATVAARAILGPFSRLRPGSDIGEEAHVGNFVETKKARLGKGAKANHLTYLGDATIGAGANVGAGTITCNYDGEKKHPTTIGEGAFIGSDSILVAPIEIGAGAYVAAGSTLTESVPPGALALGRAKQVTKEGWVARRKAEAQNKGAAEAAPAPSPADSPRGGRAS</sequence>
<evidence type="ECO:0000255" key="1">
    <source>
        <dbReference type="HAMAP-Rule" id="MF_01631"/>
    </source>
</evidence>
<evidence type="ECO:0000256" key="2">
    <source>
        <dbReference type="SAM" id="MobiDB-lite"/>
    </source>
</evidence>